<gene>
    <name evidence="1" type="primary">grpE</name>
    <name type="ordered locus">Clos_1232</name>
</gene>
<dbReference type="EMBL" id="CP000853">
    <property type="protein sequence ID" value="ABW18778.1"/>
    <property type="molecule type" value="Genomic_DNA"/>
</dbReference>
<dbReference type="RefSeq" id="WP_012159090.1">
    <property type="nucleotide sequence ID" value="NC_009922.1"/>
</dbReference>
<dbReference type="SMR" id="A8MG50"/>
<dbReference type="STRING" id="350688.Clos_1232"/>
<dbReference type="KEGG" id="aoe:Clos_1232"/>
<dbReference type="eggNOG" id="COG0576">
    <property type="taxonomic scope" value="Bacteria"/>
</dbReference>
<dbReference type="HOGENOM" id="CLU_057217_5_2_9"/>
<dbReference type="OrthoDB" id="9812586at2"/>
<dbReference type="Proteomes" id="UP000000269">
    <property type="component" value="Chromosome"/>
</dbReference>
<dbReference type="GO" id="GO:0005737">
    <property type="term" value="C:cytoplasm"/>
    <property type="evidence" value="ECO:0007669"/>
    <property type="project" value="UniProtKB-SubCell"/>
</dbReference>
<dbReference type="GO" id="GO:0000774">
    <property type="term" value="F:adenyl-nucleotide exchange factor activity"/>
    <property type="evidence" value="ECO:0007669"/>
    <property type="project" value="InterPro"/>
</dbReference>
<dbReference type="GO" id="GO:0042803">
    <property type="term" value="F:protein homodimerization activity"/>
    <property type="evidence" value="ECO:0007669"/>
    <property type="project" value="InterPro"/>
</dbReference>
<dbReference type="GO" id="GO:0051087">
    <property type="term" value="F:protein-folding chaperone binding"/>
    <property type="evidence" value="ECO:0007669"/>
    <property type="project" value="InterPro"/>
</dbReference>
<dbReference type="GO" id="GO:0051082">
    <property type="term" value="F:unfolded protein binding"/>
    <property type="evidence" value="ECO:0007669"/>
    <property type="project" value="TreeGrafter"/>
</dbReference>
<dbReference type="GO" id="GO:0006457">
    <property type="term" value="P:protein folding"/>
    <property type="evidence" value="ECO:0007669"/>
    <property type="project" value="InterPro"/>
</dbReference>
<dbReference type="CDD" id="cd00446">
    <property type="entry name" value="GrpE"/>
    <property type="match status" value="1"/>
</dbReference>
<dbReference type="FunFam" id="2.30.22.10:FF:000001">
    <property type="entry name" value="Protein GrpE"/>
    <property type="match status" value="1"/>
</dbReference>
<dbReference type="Gene3D" id="3.90.20.20">
    <property type="match status" value="1"/>
</dbReference>
<dbReference type="Gene3D" id="2.30.22.10">
    <property type="entry name" value="Head domain of nucleotide exchange factor GrpE"/>
    <property type="match status" value="1"/>
</dbReference>
<dbReference type="HAMAP" id="MF_01151">
    <property type="entry name" value="GrpE"/>
    <property type="match status" value="1"/>
</dbReference>
<dbReference type="InterPro" id="IPR000740">
    <property type="entry name" value="GrpE"/>
</dbReference>
<dbReference type="InterPro" id="IPR013805">
    <property type="entry name" value="GrpE_coiled_coil"/>
</dbReference>
<dbReference type="InterPro" id="IPR009012">
    <property type="entry name" value="GrpE_head"/>
</dbReference>
<dbReference type="NCBIfam" id="NF010738">
    <property type="entry name" value="PRK14140.1"/>
    <property type="match status" value="1"/>
</dbReference>
<dbReference type="PANTHER" id="PTHR21237">
    <property type="entry name" value="GRPE PROTEIN"/>
    <property type="match status" value="1"/>
</dbReference>
<dbReference type="PANTHER" id="PTHR21237:SF23">
    <property type="entry name" value="GRPE PROTEIN HOMOLOG, MITOCHONDRIAL"/>
    <property type="match status" value="1"/>
</dbReference>
<dbReference type="Pfam" id="PF01025">
    <property type="entry name" value="GrpE"/>
    <property type="match status" value="1"/>
</dbReference>
<dbReference type="PRINTS" id="PR00773">
    <property type="entry name" value="GRPEPROTEIN"/>
</dbReference>
<dbReference type="SUPFAM" id="SSF58014">
    <property type="entry name" value="Coiled-coil domain of nucleotide exchange factor GrpE"/>
    <property type="match status" value="1"/>
</dbReference>
<dbReference type="SUPFAM" id="SSF51064">
    <property type="entry name" value="Head domain of nucleotide exchange factor GrpE"/>
    <property type="match status" value="1"/>
</dbReference>
<organism>
    <name type="scientific">Alkaliphilus oremlandii (strain OhILAs)</name>
    <name type="common">Clostridium oremlandii (strain OhILAs)</name>
    <dbReference type="NCBI Taxonomy" id="350688"/>
    <lineage>
        <taxon>Bacteria</taxon>
        <taxon>Bacillati</taxon>
        <taxon>Bacillota</taxon>
        <taxon>Clostridia</taxon>
        <taxon>Peptostreptococcales</taxon>
        <taxon>Natronincolaceae</taxon>
        <taxon>Alkaliphilus</taxon>
    </lineage>
</organism>
<comment type="function">
    <text evidence="1">Participates actively in the response to hyperosmotic and heat shock by preventing the aggregation of stress-denatured proteins, in association with DnaK and GrpE. It is the nucleotide exchange factor for DnaK and may function as a thermosensor. Unfolded proteins bind initially to DnaJ; upon interaction with the DnaJ-bound protein, DnaK hydrolyzes its bound ATP, resulting in the formation of a stable complex. GrpE releases ADP from DnaK; ATP binding to DnaK triggers the release of the substrate protein, thus completing the reaction cycle. Several rounds of ATP-dependent interactions between DnaJ, DnaK and GrpE are required for fully efficient folding.</text>
</comment>
<comment type="subunit">
    <text evidence="1">Homodimer.</text>
</comment>
<comment type="subcellular location">
    <subcellularLocation>
        <location evidence="1">Cytoplasm</location>
    </subcellularLocation>
</comment>
<comment type="similarity">
    <text evidence="1">Belongs to the GrpE family.</text>
</comment>
<keyword id="KW-0143">Chaperone</keyword>
<keyword id="KW-0963">Cytoplasm</keyword>
<keyword id="KW-1185">Reference proteome</keyword>
<keyword id="KW-0346">Stress response</keyword>
<proteinExistence type="inferred from homology"/>
<reference key="1">
    <citation type="submission" date="2007-10" db="EMBL/GenBank/DDBJ databases">
        <title>Complete genome of Alkaliphilus oremlandii OhILAs.</title>
        <authorList>
            <person name="Copeland A."/>
            <person name="Lucas S."/>
            <person name="Lapidus A."/>
            <person name="Barry K."/>
            <person name="Detter J.C."/>
            <person name="Glavina del Rio T."/>
            <person name="Hammon N."/>
            <person name="Israni S."/>
            <person name="Dalin E."/>
            <person name="Tice H."/>
            <person name="Pitluck S."/>
            <person name="Chain P."/>
            <person name="Malfatti S."/>
            <person name="Shin M."/>
            <person name="Vergez L."/>
            <person name="Schmutz J."/>
            <person name="Larimer F."/>
            <person name="Land M."/>
            <person name="Hauser L."/>
            <person name="Kyrpides N."/>
            <person name="Mikhailova N."/>
            <person name="Stolz J.F."/>
            <person name="Dawson A."/>
            <person name="Fisher E."/>
            <person name="Crable B."/>
            <person name="Perera E."/>
            <person name="Lisak J."/>
            <person name="Ranganathan M."/>
            <person name="Basu P."/>
            <person name="Richardson P."/>
        </authorList>
    </citation>
    <scope>NUCLEOTIDE SEQUENCE [LARGE SCALE GENOMIC DNA]</scope>
    <source>
        <strain>OhILAs</strain>
    </source>
</reference>
<evidence type="ECO:0000255" key="1">
    <source>
        <dbReference type="HAMAP-Rule" id="MF_01151"/>
    </source>
</evidence>
<evidence type="ECO:0000256" key="2">
    <source>
        <dbReference type="SAM" id="MobiDB-lite"/>
    </source>
</evidence>
<protein>
    <recommendedName>
        <fullName evidence="1">Protein GrpE</fullName>
    </recommendedName>
    <alternativeName>
        <fullName evidence="1">HSP-70 cofactor</fullName>
    </alternativeName>
</protein>
<name>GRPE_ALKOO</name>
<accession>A8MG50</accession>
<sequence length="187" mass="21707">MKETKQEEMEVREDCESVDSNLEATVEEMESTKGTSEDLEQKLAEKTAQYEDIFSQFQRLQADFTNYKKRVEKEKGDIYLYANEKIALDLLNIIDNFERAIQSTEKTEENDSLLQGISLVYKQLLDTLTKHGVEEIEAMEKPFDMNLHYAVMQEESEGASNYVIDVLQKGYKIKDRILRPAMVKVSK</sequence>
<feature type="chain" id="PRO_1000065512" description="Protein GrpE">
    <location>
        <begin position="1"/>
        <end position="187"/>
    </location>
</feature>
<feature type="region of interest" description="Disordered" evidence="2">
    <location>
        <begin position="1"/>
        <end position="40"/>
    </location>
</feature>
<feature type="compositionally biased region" description="Basic and acidic residues" evidence="2">
    <location>
        <begin position="1"/>
        <end position="15"/>
    </location>
</feature>